<gene>
    <name evidence="1" type="primary">psd</name>
    <name type="ordered locus">CLI_0038</name>
</gene>
<keyword id="KW-1003">Cell membrane</keyword>
<keyword id="KW-0210">Decarboxylase</keyword>
<keyword id="KW-0444">Lipid biosynthesis</keyword>
<keyword id="KW-0443">Lipid metabolism</keyword>
<keyword id="KW-0456">Lyase</keyword>
<keyword id="KW-0472">Membrane</keyword>
<keyword id="KW-0594">Phospholipid biosynthesis</keyword>
<keyword id="KW-1208">Phospholipid metabolism</keyword>
<keyword id="KW-0670">Pyruvate</keyword>
<keyword id="KW-0865">Zymogen</keyword>
<protein>
    <recommendedName>
        <fullName evidence="1">Phosphatidylserine decarboxylase proenzyme</fullName>
        <ecNumber evidence="1">4.1.1.65</ecNumber>
    </recommendedName>
    <component>
        <recommendedName>
            <fullName evidence="1">Phosphatidylserine decarboxylase alpha chain</fullName>
        </recommendedName>
    </component>
    <component>
        <recommendedName>
            <fullName evidence="1">Phosphatidylserine decarboxylase beta chain</fullName>
        </recommendedName>
    </component>
</protein>
<sequence length="295" mass="34131">MIKYYNRKNKDYDIEKVAGEKYLNWTYSSPIGMNLLEVFIKKKIFSKIYGFYCDRRLSQKKINKFINDFQIDMSLSENQLSNFKCFNDFFTRKLKKEARPIKTDKNLLISPGDGKLLAYENLNLNSVTEVKGINYSFYELINNDSLAKEYNNGTCLVLRLCPTDYHRFHFIDNGICENTIKLNGFYYSVNPIALSKIPSVFCKNKREYSIFHSENFGDIIFMEVGATCVGSIIQTYKPNTKVLKGDEKGYFKFGGSTVILFFKKNTIKIDDDILSQSKLGYETSVIMGEPIGNKK</sequence>
<comment type="function">
    <text evidence="1">Catalyzes the formation of phosphatidylethanolamine (PtdEtn) from phosphatidylserine (PtdSer).</text>
</comment>
<comment type="catalytic activity">
    <reaction evidence="1">
        <text>a 1,2-diacyl-sn-glycero-3-phospho-L-serine + H(+) = a 1,2-diacyl-sn-glycero-3-phosphoethanolamine + CO2</text>
        <dbReference type="Rhea" id="RHEA:20828"/>
        <dbReference type="ChEBI" id="CHEBI:15378"/>
        <dbReference type="ChEBI" id="CHEBI:16526"/>
        <dbReference type="ChEBI" id="CHEBI:57262"/>
        <dbReference type="ChEBI" id="CHEBI:64612"/>
        <dbReference type="EC" id="4.1.1.65"/>
    </reaction>
</comment>
<comment type="cofactor">
    <cofactor evidence="1">
        <name>pyruvate</name>
        <dbReference type="ChEBI" id="CHEBI:15361"/>
    </cofactor>
    <text evidence="1">Binds 1 pyruvoyl group covalently per subunit.</text>
</comment>
<comment type="pathway">
    <text evidence="1">Phospholipid metabolism; phosphatidylethanolamine biosynthesis; phosphatidylethanolamine from CDP-diacylglycerol: step 2/2.</text>
</comment>
<comment type="subunit">
    <text evidence="1">Heterodimer of a large membrane-associated beta subunit and a small pyruvoyl-containing alpha subunit.</text>
</comment>
<comment type="subcellular location">
    <subcellularLocation>
        <location evidence="1">Cell membrane</location>
        <topology evidence="1">Peripheral membrane protein</topology>
    </subcellularLocation>
</comment>
<comment type="PTM">
    <text evidence="1">Is synthesized initially as an inactive proenzyme. Formation of the active enzyme involves a self-maturation process in which the active site pyruvoyl group is generated from an internal serine residue via an autocatalytic post-translational modification. Two non-identical subunits are generated from the proenzyme in this reaction, and the pyruvate is formed at the N-terminus of the alpha chain, which is derived from the carboxyl end of the proenzyme. The autoendoproteolytic cleavage occurs by a canonical serine protease mechanism, in which the side chain hydroxyl group of the serine supplies its oxygen atom to form the C-terminus of the beta chain, while the remainder of the serine residue undergoes an oxidative deamination to produce ammonia and the pyruvoyl prosthetic group on the alpha chain. During this reaction, the Ser that is part of the protease active site of the proenzyme becomes the pyruvoyl prosthetic group, which constitutes an essential element of the active site of the mature decarboxylase.</text>
</comment>
<comment type="similarity">
    <text evidence="1">Belongs to the phosphatidylserine decarboxylase family. PSD-B subfamily. Prokaryotic type II sub-subfamily.</text>
</comment>
<dbReference type="EC" id="4.1.1.65" evidence="1"/>
<dbReference type="EMBL" id="CP000728">
    <property type="protein sequence ID" value="ABS39686.1"/>
    <property type="molecule type" value="Genomic_DNA"/>
</dbReference>
<dbReference type="RefSeq" id="WP_011987168.1">
    <property type="nucleotide sequence ID" value="NC_009699.1"/>
</dbReference>
<dbReference type="SMR" id="A7G9C7"/>
<dbReference type="KEGG" id="cbf:CLI_0038"/>
<dbReference type="HOGENOM" id="CLU_029061_2_2_9"/>
<dbReference type="UniPathway" id="UPA00558">
    <property type="reaction ID" value="UER00616"/>
</dbReference>
<dbReference type="Proteomes" id="UP000002410">
    <property type="component" value="Chromosome"/>
</dbReference>
<dbReference type="GO" id="GO:0005886">
    <property type="term" value="C:plasma membrane"/>
    <property type="evidence" value="ECO:0007669"/>
    <property type="project" value="UniProtKB-SubCell"/>
</dbReference>
<dbReference type="GO" id="GO:0004609">
    <property type="term" value="F:phosphatidylserine decarboxylase activity"/>
    <property type="evidence" value="ECO:0007669"/>
    <property type="project" value="UniProtKB-UniRule"/>
</dbReference>
<dbReference type="GO" id="GO:0006646">
    <property type="term" value="P:phosphatidylethanolamine biosynthetic process"/>
    <property type="evidence" value="ECO:0007669"/>
    <property type="project" value="UniProtKB-UniRule"/>
</dbReference>
<dbReference type="HAMAP" id="MF_00663">
    <property type="entry name" value="PS_decarb_PSD_B_type2"/>
    <property type="match status" value="1"/>
</dbReference>
<dbReference type="InterPro" id="IPR003817">
    <property type="entry name" value="PS_Dcarbxylase"/>
</dbReference>
<dbReference type="InterPro" id="IPR033177">
    <property type="entry name" value="PSD-B"/>
</dbReference>
<dbReference type="InterPro" id="IPR033179">
    <property type="entry name" value="PSD_type2_pro"/>
</dbReference>
<dbReference type="NCBIfam" id="NF001941">
    <property type="entry name" value="PRK00723.1"/>
    <property type="match status" value="1"/>
</dbReference>
<dbReference type="NCBIfam" id="TIGR00163">
    <property type="entry name" value="PS_decarb"/>
    <property type="match status" value="1"/>
</dbReference>
<dbReference type="PANTHER" id="PTHR10067">
    <property type="entry name" value="PHOSPHATIDYLSERINE DECARBOXYLASE"/>
    <property type="match status" value="1"/>
</dbReference>
<dbReference type="PANTHER" id="PTHR10067:SF17">
    <property type="entry name" value="PHOSPHATIDYLSERINE DECARBOXYLASE PROENZYME 2"/>
    <property type="match status" value="1"/>
</dbReference>
<dbReference type="Pfam" id="PF02666">
    <property type="entry name" value="PS_Dcarbxylase"/>
    <property type="match status" value="1"/>
</dbReference>
<evidence type="ECO:0000255" key="1">
    <source>
        <dbReference type="HAMAP-Rule" id="MF_00663"/>
    </source>
</evidence>
<proteinExistence type="inferred from homology"/>
<accession>A7G9C7</accession>
<name>PSD_CLOBL</name>
<organism>
    <name type="scientific">Clostridium botulinum (strain Langeland / NCTC 10281 / Type F)</name>
    <dbReference type="NCBI Taxonomy" id="441772"/>
    <lineage>
        <taxon>Bacteria</taxon>
        <taxon>Bacillati</taxon>
        <taxon>Bacillota</taxon>
        <taxon>Clostridia</taxon>
        <taxon>Eubacteriales</taxon>
        <taxon>Clostridiaceae</taxon>
        <taxon>Clostridium</taxon>
    </lineage>
</organism>
<reference key="1">
    <citation type="submission" date="2007-06" db="EMBL/GenBank/DDBJ databases">
        <authorList>
            <person name="Brinkac L.M."/>
            <person name="Daugherty S."/>
            <person name="Dodson R.J."/>
            <person name="Madupu R."/>
            <person name="Brown J.L."/>
            <person name="Bruce D."/>
            <person name="Detter C."/>
            <person name="Munk C."/>
            <person name="Smith L.A."/>
            <person name="Smith T.J."/>
            <person name="White O."/>
            <person name="Brettin T.S."/>
        </authorList>
    </citation>
    <scope>NUCLEOTIDE SEQUENCE [LARGE SCALE GENOMIC DNA]</scope>
    <source>
        <strain>Langeland / NCTC 10281 / Type F</strain>
    </source>
</reference>
<feature type="chain" id="PRO_1000026612" description="Phosphatidylserine decarboxylase beta chain" evidence="1">
    <location>
        <begin position="1"/>
        <end position="255"/>
    </location>
</feature>
<feature type="chain" id="PRO_1000026613" description="Phosphatidylserine decarboxylase alpha chain" evidence="1">
    <location>
        <begin position="256"/>
        <end position="295"/>
    </location>
</feature>
<feature type="active site" description="Charge relay system; for autoendoproteolytic cleavage activity" evidence="1">
    <location>
        <position position="113"/>
    </location>
</feature>
<feature type="active site" description="Charge relay system; for autoendoproteolytic cleavage activity" evidence="1">
    <location>
        <position position="169"/>
    </location>
</feature>
<feature type="active site" description="Charge relay system; for autoendoproteolytic cleavage activity" evidence="1">
    <location>
        <position position="256"/>
    </location>
</feature>
<feature type="active site" description="Schiff-base intermediate with substrate; via pyruvic acid; for decarboxylase activity" evidence="1">
    <location>
        <position position="256"/>
    </location>
</feature>
<feature type="site" description="Cleavage (non-hydrolytic); by autocatalysis" evidence="1">
    <location>
        <begin position="255"/>
        <end position="256"/>
    </location>
</feature>
<feature type="modified residue" description="Pyruvic acid (Ser); by autocatalysis" evidence="1">
    <location>
        <position position="256"/>
    </location>
</feature>